<name>Y3439_YERPG</name>
<organism>
    <name type="scientific">Yersinia pestis bv. Antiqua (strain Angola)</name>
    <dbReference type="NCBI Taxonomy" id="349746"/>
    <lineage>
        <taxon>Bacteria</taxon>
        <taxon>Pseudomonadati</taxon>
        <taxon>Pseudomonadota</taxon>
        <taxon>Gammaproteobacteria</taxon>
        <taxon>Enterobacterales</taxon>
        <taxon>Yersiniaceae</taxon>
        <taxon>Yersinia</taxon>
    </lineage>
</organism>
<evidence type="ECO:0000255" key="1">
    <source>
        <dbReference type="HAMAP-Rule" id="MF_01519"/>
    </source>
</evidence>
<comment type="similarity">
    <text evidence="1">Belongs to the UPF0325 family.</text>
</comment>
<dbReference type="EMBL" id="CP000901">
    <property type="protein sequence ID" value="ABX84943.1"/>
    <property type="molecule type" value="Genomic_DNA"/>
</dbReference>
<dbReference type="RefSeq" id="WP_002212127.1">
    <property type="nucleotide sequence ID" value="NZ_CP009935.1"/>
</dbReference>
<dbReference type="SMR" id="A9R399"/>
<dbReference type="KEGG" id="ypg:YpAngola_A3439"/>
<dbReference type="PATRIC" id="fig|349746.12.peg.135"/>
<dbReference type="HAMAP" id="MF_01519">
    <property type="entry name" value="UPF0325"/>
    <property type="match status" value="1"/>
</dbReference>
<dbReference type="InterPro" id="IPR020911">
    <property type="entry name" value="UPF0325"/>
</dbReference>
<dbReference type="NCBIfam" id="NF010213">
    <property type="entry name" value="PRK13677.1"/>
    <property type="match status" value="1"/>
</dbReference>
<dbReference type="Pfam" id="PF11944">
    <property type="entry name" value="DUF3461"/>
    <property type="match status" value="1"/>
</dbReference>
<gene>
    <name type="ordered locus">YpAngola_A3439</name>
</gene>
<sequence>MYDNLKSLGITQPEDVDRYSLRQEANNDILKIYFRKDKGEFFAKSVKFKYPRQRKTVVSDNASHGYKEINEINPNLRYVIDELDQLCKRDQIEVDLKRKILDDLRHLESVVTNKIAEIEADLEKLTNGR</sequence>
<protein>
    <recommendedName>
        <fullName evidence="1">UPF0325 protein YpAngola_A3439</fullName>
    </recommendedName>
</protein>
<feature type="chain" id="PRO_1000198445" description="UPF0325 protein YpAngola_A3439">
    <location>
        <begin position="1"/>
        <end position="129"/>
    </location>
</feature>
<reference key="1">
    <citation type="journal article" date="2010" name="J. Bacteriol.">
        <title>Genome sequence of the deep-rooted Yersinia pestis strain Angola reveals new insights into the evolution and pangenome of the plague bacterium.</title>
        <authorList>
            <person name="Eppinger M."/>
            <person name="Worsham P.L."/>
            <person name="Nikolich M.P."/>
            <person name="Riley D.R."/>
            <person name="Sebastian Y."/>
            <person name="Mou S."/>
            <person name="Achtman M."/>
            <person name="Lindler L.E."/>
            <person name="Ravel J."/>
        </authorList>
    </citation>
    <scope>NUCLEOTIDE SEQUENCE [LARGE SCALE GENOMIC DNA]</scope>
    <source>
        <strain>Angola</strain>
    </source>
</reference>
<proteinExistence type="inferred from homology"/>
<accession>A9R399</accession>